<dbReference type="EMBL" id="AF294440">
    <property type="protein sequence ID" value="AAG42370.1"/>
    <property type="molecule type" value="Genomic_DNA"/>
</dbReference>
<dbReference type="RefSeq" id="WP_012915156.1">
    <property type="nucleotide sequence ID" value="NZ_CP046570.1"/>
</dbReference>
<dbReference type="SMR" id="Q9EZI1"/>
<dbReference type="GeneID" id="57875942"/>
<dbReference type="OMA" id="TMEASFI"/>
<dbReference type="UniPathway" id="UPA00094"/>
<dbReference type="GO" id="GO:0005829">
    <property type="term" value="C:cytosol"/>
    <property type="evidence" value="ECO:0007669"/>
    <property type="project" value="TreeGrafter"/>
</dbReference>
<dbReference type="GO" id="GO:0016020">
    <property type="term" value="C:membrane"/>
    <property type="evidence" value="ECO:0007669"/>
    <property type="project" value="GOC"/>
</dbReference>
<dbReference type="GO" id="GO:0000035">
    <property type="term" value="F:acyl binding"/>
    <property type="evidence" value="ECO:0007669"/>
    <property type="project" value="TreeGrafter"/>
</dbReference>
<dbReference type="GO" id="GO:0000036">
    <property type="term" value="F:acyl carrier activity"/>
    <property type="evidence" value="ECO:0007669"/>
    <property type="project" value="UniProtKB-UniRule"/>
</dbReference>
<dbReference type="GO" id="GO:0009245">
    <property type="term" value="P:lipid A biosynthetic process"/>
    <property type="evidence" value="ECO:0007669"/>
    <property type="project" value="TreeGrafter"/>
</dbReference>
<dbReference type="FunFam" id="1.10.1200.10:FF:000001">
    <property type="entry name" value="Acyl carrier protein"/>
    <property type="match status" value="1"/>
</dbReference>
<dbReference type="Gene3D" id="1.10.1200.10">
    <property type="entry name" value="ACP-like"/>
    <property type="match status" value="1"/>
</dbReference>
<dbReference type="HAMAP" id="MF_01217">
    <property type="entry name" value="Acyl_carrier"/>
    <property type="match status" value="1"/>
</dbReference>
<dbReference type="InterPro" id="IPR003231">
    <property type="entry name" value="ACP"/>
</dbReference>
<dbReference type="InterPro" id="IPR036736">
    <property type="entry name" value="ACP-like_sf"/>
</dbReference>
<dbReference type="InterPro" id="IPR009081">
    <property type="entry name" value="PP-bd_ACP"/>
</dbReference>
<dbReference type="InterPro" id="IPR006162">
    <property type="entry name" value="Ppantetheine_attach_site"/>
</dbReference>
<dbReference type="NCBIfam" id="TIGR00517">
    <property type="entry name" value="acyl_carrier"/>
    <property type="match status" value="1"/>
</dbReference>
<dbReference type="NCBIfam" id="NF002148">
    <property type="entry name" value="PRK00982.1-2"/>
    <property type="match status" value="1"/>
</dbReference>
<dbReference type="NCBIfam" id="NF002149">
    <property type="entry name" value="PRK00982.1-3"/>
    <property type="match status" value="1"/>
</dbReference>
<dbReference type="NCBIfam" id="NF002150">
    <property type="entry name" value="PRK00982.1-4"/>
    <property type="match status" value="1"/>
</dbReference>
<dbReference type="NCBIfam" id="NF002151">
    <property type="entry name" value="PRK00982.1-5"/>
    <property type="match status" value="1"/>
</dbReference>
<dbReference type="PANTHER" id="PTHR20863">
    <property type="entry name" value="ACYL CARRIER PROTEIN"/>
    <property type="match status" value="1"/>
</dbReference>
<dbReference type="PANTHER" id="PTHR20863:SF76">
    <property type="entry name" value="CARRIER DOMAIN-CONTAINING PROTEIN"/>
    <property type="match status" value="1"/>
</dbReference>
<dbReference type="Pfam" id="PF00550">
    <property type="entry name" value="PP-binding"/>
    <property type="match status" value="1"/>
</dbReference>
<dbReference type="SUPFAM" id="SSF47336">
    <property type="entry name" value="ACP-like"/>
    <property type="match status" value="1"/>
</dbReference>
<dbReference type="PROSITE" id="PS50075">
    <property type="entry name" value="CARRIER"/>
    <property type="match status" value="1"/>
</dbReference>
<dbReference type="PROSITE" id="PS00012">
    <property type="entry name" value="PHOSPHOPANTETHEINE"/>
    <property type="match status" value="1"/>
</dbReference>
<reference key="1">
    <citation type="journal article" date="2000" name="FEMS Microbiol. Lett.">
        <title>Characterization of the acyl carrier protein gene and the fab gene locus in Xanthomonas albilineans.</title>
        <authorList>
            <person name="Huang G."/>
            <person name="Zhang L."/>
            <person name="Birch R.G."/>
        </authorList>
    </citation>
    <scope>NUCLEOTIDE SEQUENCE [GENOMIC DNA]</scope>
    <source>
        <strain>Xa13</strain>
    </source>
</reference>
<sequence length="79" mass="8844">MSTIEERVKKIVVEQLGVKEEEVTNSASFVDDLGADSLDTVELVMALEEEFECEIPDEEAEKITSVQQAIDYVKVHVKS</sequence>
<gene>
    <name evidence="2" type="primary">acpP</name>
</gene>
<name>ACP_XANAL</name>
<keyword id="KW-0963">Cytoplasm</keyword>
<keyword id="KW-0275">Fatty acid biosynthesis</keyword>
<keyword id="KW-0276">Fatty acid metabolism</keyword>
<keyword id="KW-0444">Lipid biosynthesis</keyword>
<keyword id="KW-0443">Lipid metabolism</keyword>
<keyword id="KW-0596">Phosphopantetheine</keyword>
<keyword id="KW-0597">Phosphoprotein</keyword>
<protein>
    <recommendedName>
        <fullName evidence="2">Acyl carrier protein</fullName>
        <shortName evidence="2">ACP</shortName>
    </recommendedName>
</protein>
<evidence type="ECO:0000250" key="1"/>
<evidence type="ECO:0000255" key="2">
    <source>
        <dbReference type="HAMAP-Rule" id="MF_01217"/>
    </source>
</evidence>
<evidence type="ECO:0000255" key="3">
    <source>
        <dbReference type="PROSITE-ProRule" id="PRU00258"/>
    </source>
</evidence>
<comment type="function">
    <text evidence="2">Carrier of the growing fatty acid chain in fatty acid biosynthesis.</text>
</comment>
<comment type="pathway">
    <text evidence="2">Lipid metabolism; fatty acid biosynthesis.</text>
</comment>
<comment type="subcellular location">
    <subcellularLocation>
        <location evidence="2">Cytoplasm</location>
    </subcellularLocation>
</comment>
<comment type="PTM">
    <text evidence="2">4'-phosphopantetheine is transferred from CoA to a specific serine of apo-ACP by AcpS. This modification is essential for activity because fatty acids are bound in thioester linkage to the sulfhydryl of the prosthetic group.</text>
</comment>
<comment type="similarity">
    <text evidence="2">Belongs to the acyl carrier protein (ACP) family.</text>
</comment>
<proteinExistence type="inferred from homology"/>
<organism>
    <name type="scientific">Xanthomonas albilineans</name>
    <dbReference type="NCBI Taxonomy" id="29447"/>
    <lineage>
        <taxon>Bacteria</taxon>
        <taxon>Pseudomonadati</taxon>
        <taxon>Pseudomonadota</taxon>
        <taxon>Gammaproteobacteria</taxon>
        <taxon>Lysobacterales</taxon>
        <taxon>Lysobacteraceae</taxon>
        <taxon>Xanthomonas</taxon>
    </lineage>
</organism>
<feature type="initiator methionine" description="Removed" evidence="1">
    <location>
        <position position="1"/>
    </location>
</feature>
<feature type="chain" id="PRO_0000180221" description="Acyl carrier protein">
    <location>
        <begin position="2"/>
        <end position="79"/>
    </location>
</feature>
<feature type="domain" description="Carrier" evidence="3">
    <location>
        <begin position="2"/>
        <end position="77"/>
    </location>
</feature>
<feature type="modified residue" description="O-(pantetheine 4'-phosphoryl)serine" evidence="3">
    <location>
        <position position="37"/>
    </location>
</feature>
<accession>Q9EZI1</accession>